<proteinExistence type="inferred from homology"/>
<feature type="chain" id="PRO_0000141659" description="Cobalt-precorrin-5B C(1)-methyltransferase">
    <location>
        <begin position="1"/>
        <end position="368"/>
    </location>
</feature>
<evidence type="ECO:0000255" key="1">
    <source>
        <dbReference type="HAMAP-Rule" id="MF_00787"/>
    </source>
</evidence>
<comment type="function">
    <text evidence="1">Catalyzes the methylation of C-1 in cobalt-precorrin-5B to form cobalt-precorrin-6A.</text>
</comment>
<comment type="catalytic activity">
    <reaction evidence="1">
        <text>Co-precorrin-5B + S-adenosyl-L-methionine = Co-precorrin-6A + S-adenosyl-L-homocysteine</text>
        <dbReference type="Rhea" id="RHEA:26285"/>
        <dbReference type="ChEBI" id="CHEBI:57856"/>
        <dbReference type="ChEBI" id="CHEBI:59789"/>
        <dbReference type="ChEBI" id="CHEBI:60063"/>
        <dbReference type="ChEBI" id="CHEBI:60064"/>
        <dbReference type="EC" id="2.1.1.195"/>
    </reaction>
</comment>
<comment type="pathway">
    <text evidence="1">Cofactor biosynthesis; adenosylcobalamin biosynthesis; cob(II)yrinate a,c-diamide from sirohydrochlorin (anaerobic route): step 6/10.</text>
</comment>
<comment type="similarity">
    <text evidence="1">Belongs to the CbiD family.</text>
</comment>
<accession>Q8G018</accession>
<accession>G0KAQ7</accession>
<keyword id="KW-0169">Cobalamin biosynthesis</keyword>
<keyword id="KW-0489">Methyltransferase</keyword>
<keyword id="KW-0949">S-adenosyl-L-methionine</keyword>
<keyword id="KW-0808">Transferase</keyword>
<dbReference type="EC" id="2.1.1.195" evidence="1"/>
<dbReference type="EMBL" id="AE014291">
    <property type="protein sequence ID" value="AAN30216.1"/>
    <property type="molecule type" value="Genomic_DNA"/>
</dbReference>
<dbReference type="EMBL" id="CP002997">
    <property type="protein sequence ID" value="AEM18634.1"/>
    <property type="molecule type" value="Genomic_DNA"/>
</dbReference>
<dbReference type="RefSeq" id="WP_004689777.1">
    <property type="nucleotide sequence ID" value="NZ_KN046804.1"/>
</dbReference>
<dbReference type="SMR" id="Q8G018"/>
<dbReference type="KEGG" id="bms:BR1298"/>
<dbReference type="KEGG" id="bsi:BS1330_I1294"/>
<dbReference type="PATRIC" id="fig|204722.22.peg.260"/>
<dbReference type="HOGENOM" id="CLU_041273_0_0_5"/>
<dbReference type="PhylomeDB" id="Q8G018"/>
<dbReference type="UniPathway" id="UPA00148">
    <property type="reaction ID" value="UER00227"/>
</dbReference>
<dbReference type="Proteomes" id="UP000007104">
    <property type="component" value="Chromosome I"/>
</dbReference>
<dbReference type="GO" id="GO:0043780">
    <property type="term" value="F:cobalt-precorrin-5B C1-methyltransferase activity"/>
    <property type="evidence" value="ECO:0007669"/>
    <property type="project" value="RHEA"/>
</dbReference>
<dbReference type="GO" id="GO:0019251">
    <property type="term" value="P:anaerobic cobalamin biosynthetic process"/>
    <property type="evidence" value="ECO:0007669"/>
    <property type="project" value="UniProtKB-UniRule"/>
</dbReference>
<dbReference type="GO" id="GO:0032259">
    <property type="term" value="P:methylation"/>
    <property type="evidence" value="ECO:0007669"/>
    <property type="project" value="UniProtKB-KW"/>
</dbReference>
<dbReference type="Gene3D" id="3.30.2110.10">
    <property type="entry name" value="CbiD-like"/>
    <property type="match status" value="1"/>
</dbReference>
<dbReference type="HAMAP" id="MF_00787">
    <property type="entry name" value="CbiD"/>
    <property type="match status" value="1"/>
</dbReference>
<dbReference type="InterPro" id="IPR002748">
    <property type="entry name" value="CbiD"/>
</dbReference>
<dbReference type="InterPro" id="IPR036074">
    <property type="entry name" value="CbiD_sf"/>
</dbReference>
<dbReference type="NCBIfam" id="TIGR00312">
    <property type="entry name" value="cbiD"/>
    <property type="match status" value="1"/>
</dbReference>
<dbReference type="NCBIfam" id="NF000849">
    <property type="entry name" value="PRK00075.1-1"/>
    <property type="match status" value="1"/>
</dbReference>
<dbReference type="PANTHER" id="PTHR35863">
    <property type="entry name" value="COBALT-PRECORRIN-5B C(1)-METHYLTRANSFERASE"/>
    <property type="match status" value="1"/>
</dbReference>
<dbReference type="PANTHER" id="PTHR35863:SF1">
    <property type="entry name" value="COBALT-PRECORRIN-5B C(1)-METHYLTRANSFERASE"/>
    <property type="match status" value="1"/>
</dbReference>
<dbReference type="Pfam" id="PF01888">
    <property type="entry name" value="CbiD"/>
    <property type="match status" value="1"/>
</dbReference>
<dbReference type="PIRSF" id="PIRSF026782">
    <property type="entry name" value="CbiD"/>
    <property type="match status" value="1"/>
</dbReference>
<dbReference type="SUPFAM" id="SSF111342">
    <property type="entry name" value="CbiD-like"/>
    <property type="match status" value="1"/>
</dbReference>
<protein>
    <recommendedName>
        <fullName evidence="1">Cobalt-precorrin-5B C(1)-methyltransferase</fullName>
        <ecNumber evidence="1">2.1.1.195</ecNumber>
    </recommendedName>
    <alternativeName>
        <fullName evidence="1">Cobalt-precorrin-6A synthase</fullName>
    </alternativeName>
</protein>
<organism>
    <name type="scientific">Brucella suis biovar 1 (strain 1330)</name>
    <dbReference type="NCBI Taxonomy" id="204722"/>
    <lineage>
        <taxon>Bacteria</taxon>
        <taxon>Pseudomonadati</taxon>
        <taxon>Pseudomonadota</taxon>
        <taxon>Alphaproteobacteria</taxon>
        <taxon>Hyphomicrobiales</taxon>
        <taxon>Brucellaceae</taxon>
        <taxon>Brucella/Ochrobactrum group</taxon>
        <taxon>Brucella</taxon>
    </lineage>
</organism>
<reference key="1">
    <citation type="journal article" date="2002" name="Proc. Natl. Acad. Sci. U.S.A.">
        <title>The Brucella suis genome reveals fundamental similarities between animal and plant pathogens and symbionts.</title>
        <authorList>
            <person name="Paulsen I.T."/>
            <person name="Seshadri R."/>
            <person name="Nelson K.E."/>
            <person name="Eisen J.A."/>
            <person name="Heidelberg J.F."/>
            <person name="Read T.D."/>
            <person name="Dodson R.J."/>
            <person name="Umayam L.A."/>
            <person name="Brinkac L.M."/>
            <person name="Beanan M.J."/>
            <person name="Daugherty S.C."/>
            <person name="DeBoy R.T."/>
            <person name="Durkin A.S."/>
            <person name="Kolonay J.F."/>
            <person name="Madupu R."/>
            <person name="Nelson W.C."/>
            <person name="Ayodeji B."/>
            <person name="Kraul M."/>
            <person name="Shetty J."/>
            <person name="Malek J.A."/>
            <person name="Van Aken S.E."/>
            <person name="Riedmuller S."/>
            <person name="Tettelin H."/>
            <person name="Gill S.R."/>
            <person name="White O."/>
            <person name="Salzberg S.L."/>
            <person name="Hoover D.L."/>
            <person name="Lindler L.E."/>
            <person name="Halling S.M."/>
            <person name="Boyle S.M."/>
            <person name="Fraser C.M."/>
        </authorList>
    </citation>
    <scope>NUCLEOTIDE SEQUENCE [LARGE SCALE GENOMIC DNA]</scope>
    <source>
        <strain>1330</strain>
    </source>
</reference>
<reference key="2">
    <citation type="journal article" date="2011" name="J. Bacteriol.">
        <title>Revised genome sequence of Brucella suis 1330.</title>
        <authorList>
            <person name="Tae H."/>
            <person name="Shallom S."/>
            <person name="Settlage R."/>
            <person name="Preston D."/>
            <person name="Adams L.G."/>
            <person name="Garner H.R."/>
        </authorList>
    </citation>
    <scope>NUCLEOTIDE SEQUENCE [LARGE SCALE GENOMIC DNA]</scope>
    <source>
        <strain>1330</strain>
    </source>
</reference>
<gene>
    <name evidence="1" type="primary">cbiD</name>
    <name type="ordered locus">BR1298</name>
    <name type="ordered locus">BS1330_I1294</name>
</gene>
<sequence>MNDETTPANKNPEKAELRCGWTTGACATAATKAALTALITGEFPDPVGIILPKGEVPYFQLAYEGLGEGYAMAGIVKDAGDDPDVTHGATIISTVYPAPPGTGIIFRAGEGVGTVTREGLAIPPGEAAINPVPRRMMTEICEAICAEYGLPADLVITISVPGGEEIAQKTWNPRLGIIGGISILGTTGVVHPFSCSAWIHSIHRGIDVARAAGQKHVLGATGSTSEDAAQALYNLPDFAILDMGDFAGGVLKYLREHPIDRLTIAGGFAKLTKLAQGALDLHSSRSQVDKGFLWQIAERAGAPADMKERILLANTAMEVLELTQSIGIDIAGPIALEARQTALKTLRGAPVEVEIIVTDRKGNILARV</sequence>
<name>CBID_BRUSU</name>